<organism>
    <name type="scientific">Halalkalibacterium halodurans (strain ATCC BAA-125 / DSM 18197 / FERM 7344 / JCM 9153 / C-125)</name>
    <name type="common">Bacillus halodurans</name>
    <dbReference type="NCBI Taxonomy" id="272558"/>
    <lineage>
        <taxon>Bacteria</taxon>
        <taxon>Bacillati</taxon>
        <taxon>Bacillota</taxon>
        <taxon>Bacilli</taxon>
        <taxon>Bacillales</taxon>
        <taxon>Bacillaceae</taxon>
        <taxon>Halalkalibacterium (ex Joshi et al. 2022)</taxon>
    </lineage>
</organism>
<name>RL28_HALH5</name>
<evidence type="ECO:0000255" key="1">
    <source>
        <dbReference type="HAMAP-Rule" id="MF_00373"/>
    </source>
</evidence>
<evidence type="ECO:0000305" key="2"/>
<accession>Q9K9Z4</accession>
<protein>
    <recommendedName>
        <fullName evidence="1">Large ribosomal subunit protein bL28</fullName>
    </recommendedName>
    <alternativeName>
        <fullName evidence="2">50S ribosomal protein L28</fullName>
    </alternativeName>
</protein>
<comment type="similarity">
    <text evidence="1">Belongs to the bacterial ribosomal protein bL28 family.</text>
</comment>
<sequence length="62" mass="7069">MARKCYITGRQAKSGNKRSHAMNKTKRRWGANVQKVRILVDGKPKRVYVSARALKSGKVERV</sequence>
<proteinExistence type="inferred from homology"/>
<feature type="chain" id="PRO_0000178426" description="Large ribosomal subunit protein bL28">
    <location>
        <begin position="1"/>
        <end position="62"/>
    </location>
</feature>
<reference key="1">
    <citation type="journal article" date="2000" name="Nucleic Acids Res.">
        <title>Complete genome sequence of the alkaliphilic bacterium Bacillus halodurans and genomic sequence comparison with Bacillus subtilis.</title>
        <authorList>
            <person name="Takami H."/>
            <person name="Nakasone K."/>
            <person name="Takaki Y."/>
            <person name="Maeno G."/>
            <person name="Sasaki R."/>
            <person name="Masui N."/>
            <person name="Fuji F."/>
            <person name="Hirama C."/>
            <person name="Nakamura Y."/>
            <person name="Ogasawara N."/>
            <person name="Kuhara S."/>
            <person name="Horikoshi K."/>
        </authorList>
    </citation>
    <scope>NUCLEOTIDE SEQUENCE [LARGE SCALE GENOMIC DNA]</scope>
    <source>
        <strain>ATCC BAA-125 / DSM 18197 / FERM 7344 / JCM 9153 / C-125</strain>
    </source>
</reference>
<dbReference type="EMBL" id="BA000004">
    <property type="protein sequence ID" value="BAB06219.1"/>
    <property type="molecule type" value="Genomic_DNA"/>
</dbReference>
<dbReference type="PIR" id="D83962">
    <property type="entry name" value="D83962"/>
</dbReference>
<dbReference type="RefSeq" id="WP_010898651.1">
    <property type="nucleotide sequence ID" value="NC_002570.2"/>
</dbReference>
<dbReference type="SMR" id="Q9K9Z4"/>
<dbReference type="STRING" id="272558.gene:10728398"/>
<dbReference type="GeneID" id="87598019"/>
<dbReference type="KEGG" id="bha:BH2500"/>
<dbReference type="eggNOG" id="COG0227">
    <property type="taxonomic scope" value="Bacteria"/>
</dbReference>
<dbReference type="HOGENOM" id="CLU_064548_7_1_9"/>
<dbReference type="OrthoDB" id="9805609at2"/>
<dbReference type="Proteomes" id="UP000001258">
    <property type="component" value="Chromosome"/>
</dbReference>
<dbReference type="GO" id="GO:1990904">
    <property type="term" value="C:ribonucleoprotein complex"/>
    <property type="evidence" value="ECO:0007669"/>
    <property type="project" value="UniProtKB-KW"/>
</dbReference>
<dbReference type="GO" id="GO:0005840">
    <property type="term" value="C:ribosome"/>
    <property type="evidence" value="ECO:0007669"/>
    <property type="project" value="UniProtKB-KW"/>
</dbReference>
<dbReference type="GO" id="GO:0003735">
    <property type="term" value="F:structural constituent of ribosome"/>
    <property type="evidence" value="ECO:0007669"/>
    <property type="project" value="InterPro"/>
</dbReference>
<dbReference type="GO" id="GO:0006412">
    <property type="term" value="P:translation"/>
    <property type="evidence" value="ECO:0007669"/>
    <property type="project" value="UniProtKB-UniRule"/>
</dbReference>
<dbReference type="Gene3D" id="2.30.170.40">
    <property type="entry name" value="Ribosomal protein L28/L24"/>
    <property type="match status" value="1"/>
</dbReference>
<dbReference type="HAMAP" id="MF_00373">
    <property type="entry name" value="Ribosomal_bL28"/>
    <property type="match status" value="1"/>
</dbReference>
<dbReference type="InterPro" id="IPR050096">
    <property type="entry name" value="Bacterial_rp_bL28"/>
</dbReference>
<dbReference type="InterPro" id="IPR026569">
    <property type="entry name" value="Ribosomal_bL28"/>
</dbReference>
<dbReference type="InterPro" id="IPR034704">
    <property type="entry name" value="Ribosomal_bL28/bL31-like_sf"/>
</dbReference>
<dbReference type="InterPro" id="IPR001383">
    <property type="entry name" value="Ribosomal_bL28_bact-type"/>
</dbReference>
<dbReference type="InterPro" id="IPR037147">
    <property type="entry name" value="Ribosomal_bL28_sf"/>
</dbReference>
<dbReference type="NCBIfam" id="TIGR00009">
    <property type="entry name" value="L28"/>
    <property type="match status" value="1"/>
</dbReference>
<dbReference type="PANTHER" id="PTHR39080">
    <property type="entry name" value="50S RIBOSOMAL PROTEIN L28"/>
    <property type="match status" value="1"/>
</dbReference>
<dbReference type="PANTHER" id="PTHR39080:SF1">
    <property type="entry name" value="LARGE RIBOSOMAL SUBUNIT PROTEIN BL28A"/>
    <property type="match status" value="1"/>
</dbReference>
<dbReference type="Pfam" id="PF00830">
    <property type="entry name" value="Ribosomal_L28"/>
    <property type="match status" value="1"/>
</dbReference>
<dbReference type="SUPFAM" id="SSF143800">
    <property type="entry name" value="L28p-like"/>
    <property type="match status" value="1"/>
</dbReference>
<gene>
    <name evidence="1" type="primary">rpmB</name>
    <name type="ordered locus">BH2500</name>
</gene>
<keyword id="KW-1185">Reference proteome</keyword>
<keyword id="KW-0687">Ribonucleoprotein</keyword>
<keyword id="KW-0689">Ribosomal protein</keyword>